<comment type="function">
    <text evidence="1">Catalyzes the phosphorolysis of diverse nucleosides, yielding D-ribose 1-phosphate and the respective free bases. Can use uridine, adenosine, guanosine, cytidine, thymidine, inosine and xanthosine as substrates. Also catalyzes the reverse reactions.</text>
</comment>
<comment type="catalytic activity">
    <reaction evidence="1">
        <text>a purine D-ribonucleoside + phosphate = a purine nucleobase + alpha-D-ribose 1-phosphate</text>
        <dbReference type="Rhea" id="RHEA:19805"/>
        <dbReference type="ChEBI" id="CHEBI:26386"/>
        <dbReference type="ChEBI" id="CHEBI:43474"/>
        <dbReference type="ChEBI" id="CHEBI:57720"/>
        <dbReference type="ChEBI" id="CHEBI:142355"/>
        <dbReference type="EC" id="2.4.2.1"/>
    </reaction>
</comment>
<comment type="catalytic activity">
    <reaction evidence="1">
        <text>adenosine + phosphate = alpha-D-ribose 1-phosphate + adenine</text>
        <dbReference type="Rhea" id="RHEA:27642"/>
        <dbReference type="ChEBI" id="CHEBI:16335"/>
        <dbReference type="ChEBI" id="CHEBI:16708"/>
        <dbReference type="ChEBI" id="CHEBI:43474"/>
        <dbReference type="ChEBI" id="CHEBI:57720"/>
        <dbReference type="EC" id="2.4.2.1"/>
    </reaction>
</comment>
<comment type="catalytic activity">
    <reaction evidence="1">
        <text>cytidine + phosphate = cytosine + alpha-D-ribose 1-phosphate</text>
        <dbReference type="Rhea" id="RHEA:52540"/>
        <dbReference type="ChEBI" id="CHEBI:16040"/>
        <dbReference type="ChEBI" id="CHEBI:17562"/>
        <dbReference type="ChEBI" id="CHEBI:43474"/>
        <dbReference type="ChEBI" id="CHEBI:57720"/>
        <dbReference type="EC" id="2.4.2.2"/>
    </reaction>
</comment>
<comment type="catalytic activity">
    <reaction evidence="1">
        <text>guanosine + phosphate = alpha-D-ribose 1-phosphate + guanine</text>
        <dbReference type="Rhea" id="RHEA:13233"/>
        <dbReference type="ChEBI" id="CHEBI:16235"/>
        <dbReference type="ChEBI" id="CHEBI:16750"/>
        <dbReference type="ChEBI" id="CHEBI:43474"/>
        <dbReference type="ChEBI" id="CHEBI:57720"/>
        <dbReference type="EC" id="2.4.2.1"/>
    </reaction>
</comment>
<comment type="catalytic activity">
    <reaction evidence="1">
        <text>inosine + phosphate = alpha-D-ribose 1-phosphate + hypoxanthine</text>
        <dbReference type="Rhea" id="RHEA:27646"/>
        <dbReference type="ChEBI" id="CHEBI:17368"/>
        <dbReference type="ChEBI" id="CHEBI:17596"/>
        <dbReference type="ChEBI" id="CHEBI:43474"/>
        <dbReference type="ChEBI" id="CHEBI:57720"/>
        <dbReference type="EC" id="2.4.2.1"/>
    </reaction>
</comment>
<comment type="catalytic activity">
    <reaction evidence="1">
        <text>thymidine + phosphate = 2-deoxy-alpha-D-ribose 1-phosphate + thymine</text>
        <dbReference type="Rhea" id="RHEA:16037"/>
        <dbReference type="ChEBI" id="CHEBI:17748"/>
        <dbReference type="ChEBI" id="CHEBI:17821"/>
        <dbReference type="ChEBI" id="CHEBI:43474"/>
        <dbReference type="ChEBI" id="CHEBI:57259"/>
        <dbReference type="EC" id="2.4.2.2"/>
    </reaction>
</comment>
<comment type="catalytic activity">
    <reaction evidence="1">
        <text>uridine + phosphate = alpha-D-ribose 1-phosphate + uracil</text>
        <dbReference type="Rhea" id="RHEA:24388"/>
        <dbReference type="ChEBI" id="CHEBI:16704"/>
        <dbReference type="ChEBI" id="CHEBI:17568"/>
        <dbReference type="ChEBI" id="CHEBI:43474"/>
        <dbReference type="ChEBI" id="CHEBI:57720"/>
        <dbReference type="EC" id="2.4.2.2"/>
    </reaction>
</comment>
<comment type="catalytic activity">
    <reaction evidence="1">
        <text>xanthosine + phosphate = alpha-D-ribose 1-phosphate + xanthine</text>
        <dbReference type="Rhea" id="RHEA:27638"/>
        <dbReference type="ChEBI" id="CHEBI:17712"/>
        <dbReference type="ChEBI" id="CHEBI:18107"/>
        <dbReference type="ChEBI" id="CHEBI:43474"/>
        <dbReference type="ChEBI" id="CHEBI:57720"/>
        <dbReference type="EC" id="2.4.2.1"/>
    </reaction>
</comment>
<comment type="similarity">
    <text evidence="1">Belongs to the nucleoside phosphorylase PpnP family.</text>
</comment>
<feature type="chain" id="PRO_1000198682" description="Pyrimidine/purine nucleoside phosphorylase">
    <location>
        <begin position="1"/>
        <end position="93"/>
    </location>
</feature>
<name>PPNP_SHEPA</name>
<proteinExistence type="inferred from homology"/>
<protein>
    <recommendedName>
        <fullName evidence="1">Pyrimidine/purine nucleoside phosphorylase</fullName>
        <ecNumber evidence="1">2.4.2.1</ecNumber>
        <ecNumber evidence="1">2.4.2.2</ecNumber>
    </recommendedName>
    <alternativeName>
        <fullName evidence="1">Adenosine phosphorylase</fullName>
    </alternativeName>
    <alternativeName>
        <fullName evidence="1">Cytidine phosphorylase</fullName>
    </alternativeName>
    <alternativeName>
        <fullName evidence="1">Guanosine phosphorylase</fullName>
    </alternativeName>
    <alternativeName>
        <fullName evidence="1">Inosine phosphorylase</fullName>
    </alternativeName>
    <alternativeName>
        <fullName evidence="1">Thymidine phosphorylase</fullName>
    </alternativeName>
    <alternativeName>
        <fullName evidence="1">Uridine phosphorylase</fullName>
    </alternativeName>
    <alternativeName>
        <fullName evidence="1">Xanthosine phosphorylase</fullName>
    </alternativeName>
</protein>
<keyword id="KW-0328">Glycosyltransferase</keyword>
<keyword id="KW-1185">Reference proteome</keyword>
<keyword id="KW-0808">Transferase</keyword>
<sequence>MLAVNEYFEGQVKSISFAGADKPASVGVMEAGEYEFGTAAPEVMQVISGALTVLLPGQAEWQTFSAGEQFDVIGDAKFQVKVATQTAYLCIYG</sequence>
<evidence type="ECO:0000255" key="1">
    <source>
        <dbReference type="HAMAP-Rule" id="MF_01537"/>
    </source>
</evidence>
<gene>
    <name evidence="1" type="primary">ppnP</name>
    <name type="ordered locus">Spea_3668</name>
</gene>
<organism>
    <name type="scientific">Shewanella pealeana (strain ATCC 700345 / ANG-SQ1)</name>
    <dbReference type="NCBI Taxonomy" id="398579"/>
    <lineage>
        <taxon>Bacteria</taxon>
        <taxon>Pseudomonadati</taxon>
        <taxon>Pseudomonadota</taxon>
        <taxon>Gammaproteobacteria</taxon>
        <taxon>Alteromonadales</taxon>
        <taxon>Shewanellaceae</taxon>
        <taxon>Shewanella</taxon>
    </lineage>
</organism>
<accession>A8H8U2</accession>
<dbReference type="EC" id="2.4.2.1" evidence="1"/>
<dbReference type="EC" id="2.4.2.2" evidence="1"/>
<dbReference type="EMBL" id="CP000851">
    <property type="protein sequence ID" value="ABV88979.1"/>
    <property type="molecule type" value="Genomic_DNA"/>
</dbReference>
<dbReference type="RefSeq" id="WP_012156863.1">
    <property type="nucleotide sequence ID" value="NC_009901.1"/>
</dbReference>
<dbReference type="SMR" id="A8H8U2"/>
<dbReference type="STRING" id="398579.Spea_3668"/>
<dbReference type="KEGG" id="spl:Spea_3668"/>
<dbReference type="eggNOG" id="COG3123">
    <property type="taxonomic scope" value="Bacteria"/>
</dbReference>
<dbReference type="HOGENOM" id="CLU_157874_0_0_6"/>
<dbReference type="OrthoDB" id="9793848at2"/>
<dbReference type="Proteomes" id="UP000002608">
    <property type="component" value="Chromosome"/>
</dbReference>
<dbReference type="GO" id="GO:0005829">
    <property type="term" value="C:cytosol"/>
    <property type="evidence" value="ECO:0007669"/>
    <property type="project" value="TreeGrafter"/>
</dbReference>
<dbReference type="GO" id="GO:0047975">
    <property type="term" value="F:guanosine phosphorylase activity"/>
    <property type="evidence" value="ECO:0007669"/>
    <property type="project" value="UniProtKB-EC"/>
</dbReference>
<dbReference type="GO" id="GO:0004731">
    <property type="term" value="F:purine-nucleoside phosphorylase activity"/>
    <property type="evidence" value="ECO:0007669"/>
    <property type="project" value="UniProtKB-UniRule"/>
</dbReference>
<dbReference type="GO" id="GO:0009032">
    <property type="term" value="F:thymidine phosphorylase activity"/>
    <property type="evidence" value="ECO:0007669"/>
    <property type="project" value="UniProtKB-EC"/>
</dbReference>
<dbReference type="GO" id="GO:0004850">
    <property type="term" value="F:uridine phosphorylase activity"/>
    <property type="evidence" value="ECO:0007669"/>
    <property type="project" value="UniProtKB-EC"/>
</dbReference>
<dbReference type="CDD" id="cd20296">
    <property type="entry name" value="cupin_PpnP-like"/>
    <property type="match status" value="1"/>
</dbReference>
<dbReference type="FunFam" id="2.60.120.10:FF:000016">
    <property type="entry name" value="Pyrimidine/purine nucleoside phosphorylase"/>
    <property type="match status" value="1"/>
</dbReference>
<dbReference type="Gene3D" id="2.60.120.10">
    <property type="entry name" value="Jelly Rolls"/>
    <property type="match status" value="1"/>
</dbReference>
<dbReference type="HAMAP" id="MF_01537">
    <property type="entry name" value="Nucleos_phosphorylase_PpnP"/>
    <property type="match status" value="1"/>
</dbReference>
<dbReference type="InterPro" id="IPR009664">
    <property type="entry name" value="Ppnp"/>
</dbReference>
<dbReference type="InterPro" id="IPR014710">
    <property type="entry name" value="RmlC-like_jellyroll"/>
</dbReference>
<dbReference type="InterPro" id="IPR011051">
    <property type="entry name" value="RmlC_Cupin_sf"/>
</dbReference>
<dbReference type="PANTHER" id="PTHR36540">
    <property type="entry name" value="PYRIMIDINE/PURINE NUCLEOSIDE PHOSPHORYLASE"/>
    <property type="match status" value="1"/>
</dbReference>
<dbReference type="PANTHER" id="PTHR36540:SF1">
    <property type="entry name" value="PYRIMIDINE_PURINE NUCLEOSIDE PHOSPHORYLASE"/>
    <property type="match status" value="1"/>
</dbReference>
<dbReference type="Pfam" id="PF06865">
    <property type="entry name" value="Ppnp"/>
    <property type="match status" value="1"/>
</dbReference>
<dbReference type="SUPFAM" id="SSF51182">
    <property type="entry name" value="RmlC-like cupins"/>
    <property type="match status" value="1"/>
</dbReference>
<reference key="1">
    <citation type="submission" date="2007-10" db="EMBL/GenBank/DDBJ databases">
        <title>Complete sequence of Shewanella pealeana ATCC 700345.</title>
        <authorList>
            <consortium name="US DOE Joint Genome Institute"/>
            <person name="Copeland A."/>
            <person name="Lucas S."/>
            <person name="Lapidus A."/>
            <person name="Barry K."/>
            <person name="Glavina del Rio T."/>
            <person name="Dalin E."/>
            <person name="Tice H."/>
            <person name="Pitluck S."/>
            <person name="Chertkov O."/>
            <person name="Brettin T."/>
            <person name="Bruce D."/>
            <person name="Detter J.C."/>
            <person name="Han C."/>
            <person name="Schmutz J."/>
            <person name="Larimer F."/>
            <person name="Land M."/>
            <person name="Hauser L."/>
            <person name="Kyrpides N."/>
            <person name="Kim E."/>
            <person name="Zhao J.-S.Z."/>
            <person name="Manno D."/>
            <person name="Hawari J."/>
            <person name="Richardson P."/>
        </authorList>
    </citation>
    <scope>NUCLEOTIDE SEQUENCE [LARGE SCALE GENOMIC DNA]</scope>
    <source>
        <strain>ATCC 700345 / ANG-SQ1</strain>
    </source>
</reference>